<accession>Q62713</accession>
<feature type="signal peptide" evidence="2">
    <location>
        <begin position="1"/>
        <end position="19"/>
    </location>
</feature>
<feature type="propeptide" id="PRO_0000006863" evidence="3 4">
    <location>
        <begin position="20"/>
        <end position="58"/>
    </location>
</feature>
<feature type="peptide" id="PRO_0000006864" description="Neutrophil antibiotic peptide NP-3A">
    <location>
        <begin position="59"/>
        <end position="87"/>
    </location>
</feature>
<feature type="disulfide bond" evidence="1">
    <location>
        <begin position="59"/>
        <end position="87"/>
    </location>
</feature>
<feature type="disulfide bond" evidence="1">
    <location>
        <begin position="61"/>
        <end position="76"/>
    </location>
</feature>
<feature type="disulfide bond" evidence="1">
    <location>
        <begin position="66"/>
        <end position="86"/>
    </location>
</feature>
<reference key="1">
    <citation type="journal article" date="1995" name="J. Immunol.">
        <title>Rat neutrophil defensins. Precursor structures and expression during neutrophilic myelopoiesis.</title>
        <authorList>
            <person name="Yount N.Y."/>
            <person name="Wang M.-S.C."/>
            <person name="Yuan J."/>
            <person name="Banaiee N."/>
            <person name="Ouellette A.J."/>
            <person name="Selsted M.E."/>
        </authorList>
    </citation>
    <scope>NUCLEOTIDE SEQUENCE [MRNA]</scope>
    <scope>PROTEIN SEQUENCE OF 59-87</scope>
    <source>
        <strain>Sprague-Dawley</strain>
        <tissue>Bone marrow</tissue>
    </source>
</reference>
<reference key="2">
    <citation type="submission" date="1996-02" db="EMBL/GenBank/DDBJ databases">
        <title>Molecular characterization of genes encoding rat neutrophil defensins.</title>
        <authorList>
            <person name="Banaiee N."/>
            <person name="Yount N.Y."/>
            <person name="Selsted M.E."/>
        </authorList>
    </citation>
    <scope>NUCLEOTIDE SEQUENCE</scope>
    <source>
        <strain>Sprague-Dawley</strain>
        <tissue>Neutrophil</tissue>
    </source>
</reference>
<reference key="3">
    <citation type="journal article" date="1989" name="Infect. Immun.">
        <title>Purification and antimicrobial properties of three defensins from rat neutrophils.</title>
        <authorList>
            <person name="Eisenhauer P.B."/>
            <person name="Harwig S.S.S.L."/>
            <person name="Szklarek D."/>
            <person name="Ganz T."/>
            <person name="Selsted M.E."/>
            <person name="Lehrer R.I."/>
        </authorList>
    </citation>
    <scope>PROTEIN SEQUENCE OF 59-87</scope>
    <source>
        <strain>Sprague-Dawley</strain>
        <tissue>Peritoneal neutrophil</tissue>
    </source>
</reference>
<organism>
    <name type="scientific">Rattus norvegicus</name>
    <name type="common">Rat</name>
    <dbReference type="NCBI Taxonomy" id="10116"/>
    <lineage>
        <taxon>Eukaryota</taxon>
        <taxon>Metazoa</taxon>
        <taxon>Chordata</taxon>
        <taxon>Craniata</taxon>
        <taxon>Vertebrata</taxon>
        <taxon>Euteleostomi</taxon>
        <taxon>Mammalia</taxon>
        <taxon>Eutheria</taxon>
        <taxon>Euarchontoglires</taxon>
        <taxon>Glires</taxon>
        <taxon>Rodentia</taxon>
        <taxon>Myomorpha</taxon>
        <taxon>Muroidea</taxon>
        <taxon>Muridae</taxon>
        <taxon>Murinae</taxon>
        <taxon>Rattus</taxon>
    </lineage>
</organism>
<comment type="function">
    <text>Active in vitro against S.aureus, fungi, Gram-positive and Gram-negative bacteria and to a lesser extent against an enveloped virus.</text>
</comment>
<comment type="subcellular location">
    <subcellularLocation>
        <location>Secreted</location>
    </subcellularLocation>
</comment>
<comment type="tissue specificity">
    <text>Highest expression in bone marrow and to a much lesser extent in small intestine.</text>
</comment>
<comment type="similarity">
    <text evidence="5">Belongs to the alpha-defensin family.</text>
</comment>
<sequence>MRTLTLLTTLLLLALHTQAESPQGSTKEAPDEEQDISVFFGGDKGTALQDAAVKAGVTCSCRTSSCRFGERLSGACRLNGRIYRLCC</sequence>
<protein>
    <recommendedName>
        <fullName>Neutrophil antibiotic peptide NP-3A</fullName>
        <shortName>RatNP-3a</shortName>
    </recommendedName>
    <alternativeName>
        <fullName>Neutrophil defensin 3</fullName>
    </alternativeName>
</protein>
<evidence type="ECO:0000250" key="1"/>
<evidence type="ECO:0000255" key="2"/>
<evidence type="ECO:0000269" key="3">
    <source>
    </source>
</evidence>
<evidence type="ECO:0000269" key="4">
    <source>
    </source>
</evidence>
<evidence type="ECO:0000305" key="5"/>
<proteinExistence type="evidence at protein level"/>
<name>DEF3A_RAT</name>
<dbReference type="EMBL" id="U16683">
    <property type="protein sequence ID" value="AAA91971.1"/>
    <property type="molecule type" value="mRNA"/>
</dbReference>
<dbReference type="EMBL" id="U50353">
    <property type="protein sequence ID" value="AAC99551.1"/>
    <property type="molecule type" value="Genomic_DNA"/>
</dbReference>
<dbReference type="PIR" id="B61014">
    <property type="entry name" value="B61014"/>
</dbReference>
<dbReference type="SMR" id="Q62713"/>
<dbReference type="FunCoup" id="Q62713">
    <property type="interactions" value="11"/>
</dbReference>
<dbReference type="AGR" id="RGD:1589653"/>
<dbReference type="InParanoid" id="Q62713"/>
<dbReference type="Proteomes" id="UP000002494">
    <property type="component" value="Unplaced"/>
</dbReference>
<dbReference type="GO" id="GO:0005615">
    <property type="term" value="C:extracellular space"/>
    <property type="evidence" value="ECO:0000318"/>
    <property type="project" value="GO_Central"/>
</dbReference>
<dbReference type="GO" id="GO:0019731">
    <property type="term" value="P:antibacterial humoral response"/>
    <property type="evidence" value="ECO:0000318"/>
    <property type="project" value="GO_Central"/>
</dbReference>
<dbReference type="GO" id="GO:0061844">
    <property type="term" value="P:antimicrobial humoral immune response mediated by antimicrobial peptide"/>
    <property type="evidence" value="ECO:0000318"/>
    <property type="project" value="GO_Central"/>
</dbReference>
<dbReference type="GO" id="GO:0071222">
    <property type="term" value="P:cellular response to lipopolysaccharide"/>
    <property type="evidence" value="ECO:0000318"/>
    <property type="project" value="GO_Central"/>
</dbReference>
<dbReference type="GO" id="GO:0050832">
    <property type="term" value="P:defense response to fungus"/>
    <property type="evidence" value="ECO:0007669"/>
    <property type="project" value="UniProtKB-KW"/>
</dbReference>
<dbReference type="GO" id="GO:0050829">
    <property type="term" value="P:defense response to Gram-negative bacterium"/>
    <property type="evidence" value="ECO:0000318"/>
    <property type="project" value="GO_Central"/>
</dbReference>
<dbReference type="GO" id="GO:0050830">
    <property type="term" value="P:defense response to Gram-positive bacterium"/>
    <property type="evidence" value="ECO:0000318"/>
    <property type="project" value="GO_Central"/>
</dbReference>
<dbReference type="GO" id="GO:0051673">
    <property type="term" value="P:disruption of plasma membrane integrity in another organism"/>
    <property type="evidence" value="ECO:0000318"/>
    <property type="project" value="GO_Central"/>
</dbReference>
<dbReference type="GO" id="GO:0002227">
    <property type="term" value="P:innate immune response in mucosa"/>
    <property type="evidence" value="ECO:0000318"/>
    <property type="project" value="GO_Central"/>
</dbReference>
<dbReference type="GO" id="GO:0031640">
    <property type="term" value="P:killing of cells of another organism"/>
    <property type="evidence" value="ECO:0007669"/>
    <property type="project" value="UniProtKB-KW"/>
</dbReference>
<dbReference type="InterPro" id="IPR016327">
    <property type="entry name" value="Alpha-defensin"/>
</dbReference>
<dbReference type="InterPro" id="IPR006081">
    <property type="entry name" value="Alpha-defensin_C"/>
</dbReference>
<dbReference type="InterPro" id="IPR002366">
    <property type="entry name" value="Alpha-defensin_N"/>
</dbReference>
<dbReference type="InterPro" id="IPR006080">
    <property type="entry name" value="Beta/alpha-defensin_C"/>
</dbReference>
<dbReference type="PANTHER" id="PTHR11876">
    <property type="entry name" value="ALPHA-DEFENSIN 1"/>
    <property type="match status" value="1"/>
</dbReference>
<dbReference type="PANTHER" id="PTHR11876:SF31">
    <property type="entry name" value="DEFENSIN ALPHA 10-RELATED"/>
    <property type="match status" value="1"/>
</dbReference>
<dbReference type="Pfam" id="PF00323">
    <property type="entry name" value="Defensin_1"/>
    <property type="match status" value="1"/>
</dbReference>
<dbReference type="Pfam" id="PF00879">
    <property type="entry name" value="Defensin_propep"/>
    <property type="match status" value="1"/>
</dbReference>
<dbReference type="PIRSF" id="PIRSF001875">
    <property type="entry name" value="Alpha-defensin"/>
    <property type="match status" value="1"/>
</dbReference>
<dbReference type="SMART" id="SM01418">
    <property type="entry name" value="Defensin_propep"/>
    <property type="match status" value="1"/>
</dbReference>
<dbReference type="SMART" id="SM00048">
    <property type="entry name" value="DEFSN"/>
    <property type="match status" value="1"/>
</dbReference>
<dbReference type="SUPFAM" id="SSF57392">
    <property type="entry name" value="Defensin-like"/>
    <property type="match status" value="1"/>
</dbReference>
<dbReference type="PROSITE" id="PS00269">
    <property type="entry name" value="DEFENSIN"/>
    <property type="match status" value="1"/>
</dbReference>
<keyword id="KW-0044">Antibiotic</keyword>
<keyword id="KW-0929">Antimicrobial</keyword>
<keyword id="KW-0211">Defensin</keyword>
<keyword id="KW-0903">Direct protein sequencing</keyword>
<keyword id="KW-1015">Disulfide bond</keyword>
<keyword id="KW-0295">Fungicide</keyword>
<keyword id="KW-1185">Reference proteome</keyword>
<keyword id="KW-0964">Secreted</keyword>
<keyword id="KW-0732">Signal</keyword>